<evidence type="ECO:0000255" key="1"/>
<evidence type="ECO:0000256" key="2">
    <source>
        <dbReference type="SAM" id="MobiDB-lite"/>
    </source>
</evidence>
<evidence type="ECO:0000269" key="3">
    <source>
    </source>
</evidence>
<evidence type="ECO:0000269" key="4">
    <source>
    </source>
</evidence>
<evidence type="ECO:0000305" key="5"/>
<accession>A6NNA2</accession>
<accession>A6ND75</accession>
<keyword id="KW-1267">Proteomics identification</keyword>
<keyword id="KW-1185">Reference proteome</keyword>
<feature type="chain" id="PRO_0000341375" description="Serine/arginine repetitive matrix protein 3">
    <location>
        <begin position="1"/>
        <end position="597"/>
    </location>
</feature>
<feature type="domain" description="CWF21" evidence="1">
    <location>
        <begin position="55"/>
        <end position="98"/>
    </location>
</feature>
<feature type="region of interest" description="Disordered" evidence="2">
    <location>
        <begin position="1"/>
        <end position="47"/>
    </location>
</feature>
<feature type="region of interest" description="Disordered" evidence="2">
    <location>
        <begin position="99"/>
        <end position="597"/>
    </location>
</feature>
<feature type="compositionally biased region" description="Polar residues" evidence="2">
    <location>
        <begin position="1"/>
        <end position="31"/>
    </location>
</feature>
<feature type="compositionally biased region" description="Basic and acidic residues" evidence="2">
    <location>
        <begin position="99"/>
        <end position="109"/>
    </location>
</feature>
<feature type="compositionally biased region" description="Basic residues" evidence="2">
    <location>
        <begin position="149"/>
        <end position="158"/>
    </location>
</feature>
<feature type="compositionally biased region" description="Basic residues" evidence="2">
    <location>
        <begin position="168"/>
        <end position="186"/>
    </location>
</feature>
<feature type="compositionally biased region" description="Basic residues" evidence="2">
    <location>
        <begin position="199"/>
        <end position="211"/>
    </location>
</feature>
<feature type="compositionally biased region" description="Basic residues" evidence="2">
    <location>
        <begin position="219"/>
        <end position="243"/>
    </location>
</feature>
<feature type="compositionally biased region" description="Low complexity" evidence="2">
    <location>
        <begin position="257"/>
        <end position="278"/>
    </location>
</feature>
<feature type="compositionally biased region" description="Low complexity" evidence="2">
    <location>
        <begin position="291"/>
        <end position="313"/>
    </location>
</feature>
<feature type="compositionally biased region" description="Gly residues" evidence="2">
    <location>
        <begin position="315"/>
        <end position="328"/>
    </location>
</feature>
<feature type="compositionally biased region" description="Gly residues" evidence="2">
    <location>
        <begin position="374"/>
        <end position="383"/>
    </location>
</feature>
<feature type="compositionally biased region" description="Basic residues" evidence="2">
    <location>
        <begin position="384"/>
        <end position="412"/>
    </location>
</feature>
<feature type="compositionally biased region" description="Low complexity" evidence="2">
    <location>
        <begin position="417"/>
        <end position="433"/>
    </location>
</feature>
<feature type="compositionally biased region" description="Low complexity" evidence="2">
    <location>
        <begin position="466"/>
        <end position="476"/>
    </location>
</feature>
<feature type="compositionally biased region" description="Low complexity" evidence="2">
    <location>
        <begin position="488"/>
        <end position="507"/>
    </location>
</feature>
<feature type="compositionally biased region" description="Basic and acidic residues" evidence="2">
    <location>
        <begin position="530"/>
        <end position="549"/>
    </location>
</feature>
<feature type="compositionally biased region" description="Basic residues" evidence="2">
    <location>
        <begin position="550"/>
        <end position="565"/>
    </location>
</feature>
<feature type="sequence conflict" description="In Ref. 2; BC029292." evidence="5" ref="2">
    <original>S</original>
    <variation>A</variation>
    <location>
        <position position="27"/>
    </location>
</feature>
<proteinExistence type="evidence at protein level"/>
<protein>
    <recommendedName>
        <fullName>Serine/arginine repetitive matrix protein 3</fullName>
    </recommendedName>
</protein>
<name>SRRM3_HUMAN</name>
<dbReference type="EMBL" id="AC005077">
    <property type="status" value="NOT_ANNOTATED_CDS"/>
    <property type="molecule type" value="Genomic_DNA"/>
</dbReference>
<dbReference type="EMBL" id="BC029292">
    <property type="status" value="NOT_ANNOTATED_CDS"/>
    <property type="molecule type" value="mRNA"/>
</dbReference>
<dbReference type="SMR" id="A6NNA2"/>
<dbReference type="FunCoup" id="A6NNA2">
    <property type="interactions" value="59"/>
</dbReference>
<dbReference type="STRING" id="9606.ENSP00000480851"/>
<dbReference type="GlyGen" id="A6NNA2">
    <property type="glycosylation" value="1 site"/>
</dbReference>
<dbReference type="iPTMnet" id="A6NNA2"/>
<dbReference type="PhosphoSitePlus" id="A6NNA2"/>
<dbReference type="BioMuta" id="SRRM3"/>
<dbReference type="MassIVE" id="A6NNA2"/>
<dbReference type="PaxDb" id="9606-ENSP00000480851"/>
<dbReference type="ProteomicsDB" id="1593"/>
<dbReference type="AGR" id="HGNC:26729"/>
<dbReference type="GeneCards" id="SRRM3"/>
<dbReference type="HGNC" id="HGNC:26729">
    <property type="gene designation" value="SRRM3"/>
</dbReference>
<dbReference type="neXtProt" id="NX_A6NNA2"/>
<dbReference type="eggNOG" id="KOG1869">
    <property type="taxonomic scope" value="Eukaryota"/>
</dbReference>
<dbReference type="InParanoid" id="A6NNA2"/>
<dbReference type="OrthoDB" id="10267305at2759"/>
<dbReference type="PAN-GO" id="A6NNA2">
    <property type="GO annotations" value="1 GO annotation based on evolutionary models"/>
</dbReference>
<dbReference type="TreeFam" id="TF335721"/>
<dbReference type="PathwayCommons" id="A6NNA2"/>
<dbReference type="ChiTaRS" id="SRRM3">
    <property type="organism name" value="human"/>
</dbReference>
<dbReference type="Pharos" id="A6NNA2">
    <property type="development level" value="Tdark"/>
</dbReference>
<dbReference type="PRO" id="PR:A6NNA2"/>
<dbReference type="Proteomes" id="UP000005640">
    <property type="component" value="Unplaced"/>
</dbReference>
<dbReference type="RNAct" id="A6NNA2">
    <property type="molecule type" value="protein"/>
</dbReference>
<dbReference type="GO" id="GO:0005634">
    <property type="term" value="C:nucleus"/>
    <property type="evidence" value="ECO:0007669"/>
    <property type="project" value="UniProtKB-ARBA"/>
</dbReference>
<dbReference type="GO" id="GO:0003729">
    <property type="term" value="F:mRNA binding"/>
    <property type="evidence" value="ECO:0000318"/>
    <property type="project" value="GO_Central"/>
</dbReference>
<dbReference type="CDD" id="cd21376">
    <property type="entry name" value="cwf21_SRRM3"/>
    <property type="match status" value="1"/>
</dbReference>
<dbReference type="Gene3D" id="6.10.140.420">
    <property type="match status" value="1"/>
</dbReference>
<dbReference type="InterPro" id="IPR013170">
    <property type="entry name" value="mRNA_splic_Cwf21_dom"/>
</dbReference>
<dbReference type="InterPro" id="IPR047489">
    <property type="entry name" value="SRRM3_cwf21"/>
</dbReference>
<dbReference type="InterPro" id="IPR029360">
    <property type="entry name" value="SRRM_C"/>
</dbReference>
<dbReference type="InterPro" id="IPR052109">
    <property type="entry name" value="SRRM_Domain-Containing"/>
</dbReference>
<dbReference type="PANTHER" id="PTHR34755">
    <property type="entry name" value="SERINE/ARGININE REPETITIVE MATRIX PROTEIN 3-RELATED"/>
    <property type="match status" value="1"/>
</dbReference>
<dbReference type="PANTHER" id="PTHR34755:SF2">
    <property type="entry name" value="SERINE_ARGININE REPETITIVE MATRIX PROTEIN 3"/>
    <property type="match status" value="1"/>
</dbReference>
<dbReference type="Pfam" id="PF08312">
    <property type="entry name" value="cwf21"/>
    <property type="match status" value="1"/>
</dbReference>
<dbReference type="Pfam" id="PF15230">
    <property type="entry name" value="SRRM_C"/>
    <property type="match status" value="1"/>
</dbReference>
<dbReference type="SMART" id="SM01115">
    <property type="entry name" value="cwf21"/>
    <property type="match status" value="1"/>
</dbReference>
<gene>
    <name type="primary">SRRM3</name>
</gene>
<reference key="1">
    <citation type="journal article" date="2003" name="Nature">
        <title>The DNA sequence of human chromosome 7.</title>
        <authorList>
            <person name="Hillier L.W."/>
            <person name="Fulton R.S."/>
            <person name="Fulton L.A."/>
            <person name="Graves T.A."/>
            <person name="Pepin K.H."/>
            <person name="Wagner-McPherson C."/>
            <person name="Layman D."/>
            <person name="Maas J."/>
            <person name="Jaeger S."/>
            <person name="Walker R."/>
            <person name="Wylie K."/>
            <person name="Sekhon M."/>
            <person name="Becker M.C."/>
            <person name="O'Laughlin M.D."/>
            <person name="Schaller M.E."/>
            <person name="Fewell G.A."/>
            <person name="Delehaunty K.D."/>
            <person name="Miner T.L."/>
            <person name="Nash W.E."/>
            <person name="Cordes M."/>
            <person name="Du H."/>
            <person name="Sun H."/>
            <person name="Edwards J."/>
            <person name="Bradshaw-Cordum H."/>
            <person name="Ali J."/>
            <person name="Andrews S."/>
            <person name="Isak A."/>
            <person name="Vanbrunt A."/>
            <person name="Nguyen C."/>
            <person name="Du F."/>
            <person name="Lamar B."/>
            <person name="Courtney L."/>
            <person name="Kalicki J."/>
            <person name="Ozersky P."/>
            <person name="Bielicki L."/>
            <person name="Scott K."/>
            <person name="Holmes A."/>
            <person name="Harkins R."/>
            <person name="Harris A."/>
            <person name="Strong C.M."/>
            <person name="Hou S."/>
            <person name="Tomlinson C."/>
            <person name="Dauphin-Kohlberg S."/>
            <person name="Kozlowicz-Reilly A."/>
            <person name="Leonard S."/>
            <person name="Rohlfing T."/>
            <person name="Rock S.M."/>
            <person name="Tin-Wollam A.-M."/>
            <person name="Abbott A."/>
            <person name="Minx P."/>
            <person name="Maupin R."/>
            <person name="Strowmatt C."/>
            <person name="Latreille P."/>
            <person name="Miller N."/>
            <person name="Johnson D."/>
            <person name="Murray J."/>
            <person name="Woessner J.P."/>
            <person name="Wendl M.C."/>
            <person name="Yang S.-P."/>
            <person name="Schultz B.R."/>
            <person name="Wallis J.W."/>
            <person name="Spieth J."/>
            <person name="Bieri T.A."/>
            <person name="Nelson J.O."/>
            <person name="Berkowicz N."/>
            <person name="Wohldmann P.E."/>
            <person name="Cook L.L."/>
            <person name="Hickenbotham M.T."/>
            <person name="Eldred J."/>
            <person name="Williams D."/>
            <person name="Bedell J.A."/>
            <person name="Mardis E.R."/>
            <person name="Clifton S.W."/>
            <person name="Chissoe S.L."/>
            <person name="Marra M.A."/>
            <person name="Raymond C."/>
            <person name="Haugen E."/>
            <person name="Gillett W."/>
            <person name="Zhou Y."/>
            <person name="James R."/>
            <person name="Phelps K."/>
            <person name="Iadanoto S."/>
            <person name="Bubb K."/>
            <person name="Simms E."/>
            <person name="Levy R."/>
            <person name="Clendenning J."/>
            <person name="Kaul R."/>
            <person name="Kent W.J."/>
            <person name="Furey T.S."/>
            <person name="Baertsch R.A."/>
            <person name="Brent M.R."/>
            <person name="Keibler E."/>
            <person name="Flicek P."/>
            <person name="Bork P."/>
            <person name="Suyama M."/>
            <person name="Bailey J.A."/>
            <person name="Portnoy M.E."/>
            <person name="Torrents D."/>
            <person name="Chinwalla A.T."/>
            <person name="Gish W.R."/>
            <person name="Eddy S.R."/>
            <person name="McPherson J.D."/>
            <person name="Olson M.V."/>
            <person name="Eichler E.E."/>
            <person name="Green E.D."/>
            <person name="Waterston R.H."/>
            <person name="Wilson R.K."/>
        </authorList>
    </citation>
    <scope>NUCLEOTIDE SEQUENCE [LARGE SCALE GENOMIC DNA]</scope>
</reference>
<reference key="2">
    <citation type="journal article" date="2004" name="Genome Res.">
        <title>The status, quality, and expansion of the NIH full-length cDNA project: the Mammalian Gene Collection (MGC).</title>
        <authorList>
            <consortium name="The MGC Project Team"/>
        </authorList>
    </citation>
    <scope>NUCLEOTIDE SEQUENCE [LARGE SCALE MRNA] OF 1-351</scope>
</reference>
<reference key="3">
    <citation type="journal article" date="2015" name="Sci. Rep.">
        <title>Non-coding RNAs derived from an alternatively spliced REST transcript (REST-003) regulate breast cancer invasiveness.</title>
        <authorList>
            <person name="Lee N.S."/>
            <person name="Evgrafov O.V."/>
            <person name="Souaiaia T."/>
            <person name="Bonyad A."/>
            <person name="Herstein J."/>
            <person name="Lee J.Y."/>
            <person name="Kim J."/>
            <person name="Ning Y."/>
            <person name="Sixto M."/>
            <person name="Weitz A.C."/>
            <person name="Lenz H.J."/>
            <person name="Wang K."/>
            <person name="Knowles J.A."/>
            <person name="Press M.F."/>
            <person name="Salvaterra P.M."/>
            <person name="Shung K.K."/>
            <person name="Chow R.H."/>
        </authorList>
    </citation>
    <scope>FUNCTION</scope>
    <scope>TISSUE SPECIFICITY</scope>
</reference>
<reference key="4">
    <citation type="journal article" date="2016" name="Int. J. Oncol.">
        <title>RING1 and YY1 binding protein suppresses breast cancer growth and metastasis.</title>
        <authorList>
            <person name="Zhou H."/>
            <person name="Li J."/>
            <person name="Zhang Z."/>
            <person name="Ye R."/>
            <person name="Shao N."/>
            <person name="Cheang T."/>
            <person name="Wang S."/>
        </authorList>
    </citation>
    <scope>FUNCTION</scope>
</reference>
<organism>
    <name type="scientific">Homo sapiens</name>
    <name type="common">Human</name>
    <dbReference type="NCBI Taxonomy" id="9606"/>
    <lineage>
        <taxon>Eukaryota</taxon>
        <taxon>Metazoa</taxon>
        <taxon>Chordata</taxon>
        <taxon>Craniata</taxon>
        <taxon>Vertebrata</taxon>
        <taxon>Euteleostomi</taxon>
        <taxon>Mammalia</taxon>
        <taxon>Eutheria</taxon>
        <taxon>Euarchontoglires</taxon>
        <taxon>Primates</taxon>
        <taxon>Haplorrhini</taxon>
        <taxon>Catarrhini</taxon>
        <taxon>Hominidae</taxon>
        <taxon>Homo</taxon>
    </lineage>
</organism>
<sequence>MSSTVNNGAASMQSTPDAANGFPQPSSSSGTWPRAEEELRAAEPGLVKRAHREILDHERKRRVELKCMELQEMMEEQGYSEEEIRQKVGTFRQMLMEKEGVLTREDRPGGHIVAETPRLTEGAEPGLEYAPFDDDDGPVDCDCPASCYRGHRGYRTKHWSSSSASPPPKKKKKKKGGHRRSRKKRRLESECSCGSSSPLRKKKKSVKKHRRDRSDSGSRRKRRHRSRSSKCKRKEKNKEKKRPHTESPGRRSHRHSSGSSHSPSLSSHYSDSRSPSRLSPKHRDEGRKTGSQRSSGSRSPSPSGGSGWGSPQRNGGSGQRSGAHGGRPGSAHSPPDKPSSPSPRVRDKAAAAAPTPPARGKESPSPRSAPSSQGRGGRAAGGAGRRRRRRRRRRRSRSSASAPRRRGRRRPRPAPPRGSSRSLSRARSSSDSGSGRGAPGPGPEPGSERGHGGHGKRAKERPPRARPASTSPSPGAHGRRGGPEGKSSSRSPGPHPRSWSSSRSPSKSRSRSAEKRPHSPSRSPSPKKPLSRDKDGEGRARHSEAEATRARRRSRSYSPIRKRRRDSPSFMEPRRITSAASVLFHTTGPAPLPPPAA</sequence>
<comment type="function">
    <text evidence="3 4">May play a role in regulating breast cancer cell invasiveness (PubMed:26053433). May be involved in RYBP-mediated breast cancer progression (PubMed:27748911).</text>
</comment>
<comment type="tissue specificity">
    <text evidence="3">Expressed in breast cancer cell lines.</text>
</comment>
<comment type="similarity">
    <text evidence="5">Belongs to the CWC21 family.</text>
</comment>